<reference key="1">
    <citation type="journal article" date="2006" name="J. Bacteriol.">
        <title>Pathogenomic sequence analysis of Bacillus cereus and Bacillus thuringiensis isolates closely related to Bacillus anthracis.</title>
        <authorList>
            <person name="Han C.S."/>
            <person name="Xie G."/>
            <person name="Challacombe J.F."/>
            <person name="Altherr M.R."/>
            <person name="Bhotika S.S."/>
            <person name="Bruce D."/>
            <person name="Campbell C.S."/>
            <person name="Campbell M.L."/>
            <person name="Chen J."/>
            <person name="Chertkov O."/>
            <person name="Cleland C."/>
            <person name="Dimitrijevic M."/>
            <person name="Doggett N.A."/>
            <person name="Fawcett J.J."/>
            <person name="Glavina T."/>
            <person name="Goodwin L.A."/>
            <person name="Hill K.K."/>
            <person name="Hitchcock P."/>
            <person name="Jackson P.J."/>
            <person name="Keim P."/>
            <person name="Kewalramani A.R."/>
            <person name="Longmire J."/>
            <person name="Lucas S."/>
            <person name="Malfatti S."/>
            <person name="McMurry K."/>
            <person name="Meincke L.J."/>
            <person name="Misra M."/>
            <person name="Moseman B.L."/>
            <person name="Mundt M."/>
            <person name="Munk A.C."/>
            <person name="Okinaka R.T."/>
            <person name="Parson-Quintana B."/>
            <person name="Reilly L.P."/>
            <person name="Richardson P."/>
            <person name="Robinson D.L."/>
            <person name="Rubin E."/>
            <person name="Saunders E."/>
            <person name="Tapia R."/>
            <person name="Tesmer J.G."/>
            <person name="Thayer N."/>
            <person name="Thompson L.S."/>
            <person name="Tice H."/>
            <person name="Ticknor L.O."/>
            <person name="Wills P.L."/>
            <person name="Brettin T.S."/>
            <person name="Gilna P."/>
        </authorList>
    </citation>
    <scope>NUCLEOTIDE SEQUENCE [LARGE SCALE GENOMIC DNA]</scope>
    <source>
        <strain>ZK / E33L</strain>
    </source>
</reference>
<evidence type="ECO:0000255" key="1">
    <source>
        <dbReference type="HAMAP-Rule" id="MF_01427"/>
    </source>
</evidence>
<evidence type="ECO:0000255" key="2">
    <source>
        <dbReference type="PROSITE-ProRule" id="PRU01175"/>
    </source>
</evidence>
<name>YHAM_BACCZ</name>
<accession>Q63EZ0</accession>
<feature type="chain" id="PRO_0000109856" description="3'-5' exoribonuclease YhaM">
    <location>
        <begin position="1"/>
        <end position="314"/>
    </location>
</feature>
<feature type="domain" description="HD" evidence="2">
    <location>
        <begin position="163"/>
        <end position="279"/>
    </location>
</feature>
<feature type="DNA-binding region" description="OB">
    <location>
        <begin position="14"/>
        <end position="90"/>
    </location>
</feature>
<keyword id="KW-0238">DNA-binding</keyword>
<keyword id="KW-0269">Exonuclease</keyword>
<keyword id="KW-0378">Hydrolase</keyword>
<keyword id="KW-0540">Nuclease</keyword>
<organism>
    <name type="scientific">Bacillus cereus (strain ZK / E33L)</name>
    <dbReference type="NCBI Taxonomy" id="288681"/>
    <lineage>
        <taxon>Bacteria</taxon>
        <taxon>Bacillati</taxon>
        <taxon>Bacillota</taxon>
        <taxon>Bacilli</taxon>
        <taxon>Bacillales</taxon>
        <taxon>Bacillaceae</taxon>
        <taxon>Bacillus</taxon>
        <taxon>Bacillus cereus group</taxon>
    </lineage>
</organism>
<comment type="function">
    <text evidence="1">Shows a 3'-5' exoribonuclease activity.</text>
</comment>
<comment type="similarity">
    <text evidence="1">Belongs to the YhaM family.</text>
</comment>
<protein>
    <recommendedName>
        <fullName evidence="1">3'-5' exoribonuclease YhaM</fullName>
        <ecNumber evidence="1">3.1.-.-</ecNumber>
    </recommendedName>
</protein>
<sequence length="314" mass="35514">MKKKIAEYEVGEQVDIFLLIKTATKGIASNGKPFLTVILQDPSGDIEAKLWDVSPEVEKQYVAETIVKVAGDILNYKGRIQLRVKQIRVANENEVTDISDFVEKAPVKKEDMVEKITQYIFEMRNPNIQRLTRHLLNKHQNEFLDYPAATKNHHEFVSGLAYHVVSMLDLAKAISNLYPSLDKDLLYAGVILHDLGKVIELSGPISTTYTLEGNLLGHISIMVNEIGKAADELQIDAEEVLILQHIVLSHHGKAEWGSPKPPLVKEAEILHYIDNLDAKMNMMDRALGRTKPGEYTERVFALDNRSFYKPSFHN</sequence>
<dbReference type="EC" id="3.1.-.-" evidence="1"/>
<dbReference type="EMBL" id="CP000001">
    <property type="protein sequence ID" value="AAU19325.1"/>
    <property type="molecule type" value="Genomic_DNA"/>
</dbReference>
<dbReference type="RefSeq" id="WP_000726638.1">
    <property type="nucleotide sequence ID" value="NZ_CP009968.1"/>
</dbReference>
<dbReference type="SMR" id="Q63EZ0"/>
<dbReference type="GeneID" id="69533483"/>
<dbReference type="KEGG" id="bcz:BCE33L0920"/>
<dbReference type="PATRIC" id="fig|288681.22.peg.4653"/>
<dbReference type="Proteomes" id="UP000002612">
    <property type="component" value="Chromosome"/>
</dbReference>
<dbReference type="GO" id="GO:0000175">
    <property type="term" value="F:3'-5'-RNA exonuclease activity"/>
    <property type="evidence" value="ECO:0007669"/>
    <property type="project" value="UniProtKB-UniRule"/>
</dbReference>
<dbReference type="GO" id="GO:0003677">
    <property type="term" value="F:DNA binding"/>
    <property type="evidence" value="ECO:0007669"/>
    <property type="project" value="UniProtKB-KW"/>
</dbReference>
<dbReference type="GO" id="GO:0031125">
    <property type="term" value="P:rRNA 3'-end processing"/>
    <property type="evidence" value="ECO:0007669"/>
    <property type="project" value="TreeGrafter"/>
</dbReference>
<dbReference type="CDD" id="cd00077">
    <property type="entry name" value="HDc"/>
    <property type="match status" value="1"/>
</dbReference>
<dbReference type="CDD" id="cd04492">
    <property type="entry name" value="YhaM_OBF_like"/>
    <property type="match status" value="1"/>
</dbReference>
<dbReference type="FunFam" id="1.10.3210.10:FF:000008">
    <property type="entry name" value="3'-5' exoribonuclease YhaM"/>
    <property type="match status" value="1"/>
</dbReference>
<dbReference type="Gene3D" id="1.10.3210.10">
    <property type="entry name" value="Hypothetical protein af1432"/>
    <property type="match status" value="1"/>
</dbReference>
<dbReference type="Gene3D" id="2.40.50.140">
    <property type="entry name" value="Nucleic acid-binding proteins"/>
    <property type="match status" value="1"/>
</dbReference>
<dbReference type="HAMAP" id="MF_01427">
    <property type="entry name" value="3_5_Exoribonuc_YhaM"/>
    <property type="match status" value="1"/>
</dbReference>
<dbReference type="InterPro" id="IPR020873">
    <property type="entry name" value="3'-5'_exoribonuclease_YhaM"/>
</dbReference>
<dbReference type="InterPro" id="IPR003607">
    <property type="entry name" value="HD/PDEase_dom"/>
</dbReference>
<dbReference type="InterPro" id="IPR006674">
    <property type="entry name" value="HD_domain"/>
</dbReference>
<dbReference type="InterPro" id="IPR012340">
    <property type="entry name" value="NA-bd_OB-fold"/>
</dbReference>
<dbReference type="InterPro" id="IPR004365">
    <property type="entry name" value="NA-bd_OB_tRNA"/>
</dbReference>
<dbReference type="InterPro" id="IPR050798">
    <property type="entry name" value="YhaM_exoribonuc/phosphodiest"/>
</dbReference>
<dbReference type="NCBIfam" id="NF010007">
    <property type="entry name" value="PRK13480.1"/>
    <property type="match status" value="1"/>
</dbReference>
<dbReference type="PANTHER" id="PTHR37294">
    <property type="entry name" value="3'-5' EXORIBONUCLEASE YHAM"/>
    <property type="match status" value="1"/>
</dbReference>
<dbReference type="PANTHER" id="PTHR37294:SF1">
    <property type="entry name" value="3'-5' EXORIBONUCLEASE YHAM"/>
    <property type="match status" value="1"/>
</dbReference>
<dbReference type="Pfam" id="PF01966">
    <property type="entry name" value="HD"/>
    <property type="match status" value="1"/>
</dbReference>
<dbReference type="Pfam" id="PF01336">
    <property type="entry name" value="tRNA_anti-codon"/>
    <property type="match status" value="1"/>
</dbReference>
<dbReference type="SMART" id="SM00471">
    <property type="entry name" value="HDc"/>
    <property type="match status" value="1"/>
</dbReference>
<dbReference type="SUPFAM" id="SSF109604">
    <property type="entry name" value="HD-domain/PDEase-like"/>
    <property type="match status" value="1"/>
</dbReference>
<dbReference type="SUPFAM" id="SSF50249">
    <property type="entry name" value="Nucleic acid-binding proteins"/>
    <property type="match status" value="1"/>
</dbReference>
<dbReference type="PROSITE" id="PS51831">
    <property type="entry name" value="HD"/>
    <property type="match status" value="1"/>
</dbReference>
<proteinExistence type="inferred from homology"/>
<gene>
    <name evidence="1" type="primary">yhaM</name>
    <name type="ordered locus">BCE33L0920</name>
</gene>